<feature type="chain" id="PRO_1000214499" description="DNA-directed RNA polymerase subunit beta'">
    <location>
        <begin position="1"/>
        <end position="1434"/>
    </location>
</feature>
<feature type="binding site" evidence="1">
    <location>
        <position position="70"/>
    </location>
    <ligand>
        <name>Zn(2+)</name>
        <dbReference type="ChEBI" id="CHEBI:29105"/>
        <label>1</label>
    </ligand>
</feature>
<feature type="binding site" evidence="1">
    <location>
        <position position="72"/>
    </location>
    <ligand>
        <name>Zn(2+)</name>
        <dbReference type="ChEBI" id="CHEBI:29105"/>
        <label>1</label>
    </ligand>
</feature>
<feature type="binding site" evidence="1">
    <location>
        <position position="85"/>
    </location>
    <ligand>
        <name>Zn(2+)</name>
        <dbReference type="ChEBI" id="CHEBI:29105"/>
        <label>1</label>
    </ligand>
</feature>
<feature type="binding site" evidence="1">
    <location>
        <position position="88"/>
    </location>
    <ligand>
        <name>Zn(2+)</name>
        <dbReference type="ChEBI" id="CHEBI:29105"/>
        <label>1</label>
    </ligand>
</feature>
<feature type="binding site" evidence="1">
    <location>
        <position position="460"/>
    </location>
    <ligand>
        <name>Mg(2+)</name>
        <dbReference type="ChEBI" id="CHEBI:18420"/>
    </ligand>
</feature>
<feature type="binding site" evidence="1">
    <location>
        <position position="462"/>
    </location>
    <ligand>
        <name>Mg(2+)</name>
        <dbReference type="ChEBI" id="CHEBI:18420"/>
    </ligand>
</feature>
<feature type="binding site" evidence="1">
    <location>
        <position position="464"/>
    </location>
    <ligand>
        <name>Mg(2+)</name>
        <dbReference type="ChEBI" id="CHEBI:18420"/>
    </ligand>
</feature>
<feature type="binding site" evidence="1">
    <location>
        <position position="840"/>
    </location>
    <ligand>
        <name>Zn(2+)</name>
        <dbReference type="ChEBI" id="CHEBI:29105"/>
        <label>2</label>
    </ligand>
</feature>
<feature type="binding site" evidence="1">
    <location>
        <position position="914"/>
    </location>
    <ligand>
        <name>Zn(2+)</name>
        <dbReference type="ChEBI" id="CHEBI:29105"/>
        <label>2</label>
    </ligand>
</feature>
<feature type="binding site" evidence="1">
    <location>
        <position position="921"/>
    </location>
    <ligand>
        <name>Zn(2+)</name>
        <dbReference type="ChEBI" id="CHEBI:29105"/>
        <label>2</label>
    </ligand>
</feature>
<feature type="binding site" evidence="1">
    <location>
        <position position="924"/>
    </location>
    <ligand>
        <name>Zn(2+)</name>
        <dbReference type="ChEBI" id="CHEBI:29105"/>
        <label>2</label>
    </ligand>
</feature>
<gene>
    <name evidence="1" type="primary">rpoC</name>
    <name type="ordered locus">Tola_2782</name>
</gene>
<dbReference type="EC" id="2.7.7.6" evidence="1"/>
<dbReference type="EMBL" id="CP001616">
    <property type="protein sequence ID" value="ACQ94375.1"/>
    <property type="molecule type" value="Genomic_DNA"/>
</dbReference>
<dbReference type="RefSeq" id="WP_015879824.1">
    <property type="nucleotide sequence ID" value="NC_012691.1"/>
</dbReference>
<dbReference type="SMR" id="C4LBV1"/>
<dbReference type="STRING" id="595494.Tola_2782"/>
<dbReference type="KEGG" id="tau:Tola_2782"/>
<dbReference type="eggNOG" id="COG0086">
    <property type="taxonomic scope" value="Bacteria"/>
</dbReference>
<dbReference type="HOGENOM" id="CLU_000524_3_1_6"/>
<dbReference type="OrthoDB" id="9815296at2"/>
<dbReference type="Proteomes" id="UP000009073">
    <property type="component" value="Chromosome"/>
</dbReference>
<dbReference type="GO" id="GO:0000428">
    <property type="term" value="C:DNA-directed RNA polymerase complex"/>
    <property type="evidence" value="ECO:0007669"/>
    <property type="project" value="UniProtKB-KW"/>
</dbReference>
<dbReference type="GO" id="GO:0003677">
    <property type="term" value="F:DNA binding"/>
    <property type="evidence" value="ECO:0007669"/>
    <property type="project" value="UniProtKB-UniRule"/>
</dbReference>
<dbReference type="GO" id="GO:0003899">
    <property type="term" value="F:DNA-directed RNA polymerase activity"/>
    <property type="evidence" value="ECO:0007669"/>
    <property type="project" value="UniProtKB-UniRule"/>
</dbReference>
<dbReference type="GO" id="GO:0000287">
    <property type="term" value="F:magnesium ion binding"/>
    <property type="evidence" value="ECO:0007669"/>
    <property type="project" value="UniProtKB-UniRule"/>
</dbReference>
<dbReference type="GO" id="GO:0008270">
    <property type="term" value="F:zinc ion binding"/>
    <property type="evidence" value="ECO:0007669"/>
    <property type="project" value="UniProtKB-UniRule"/>
</dbReference>
<dbReference type="GO" id="GO:0006351">
    <property type="term" value="P:DNA-templated transcription"/>
    <property type="evidence" value="ECO:0007669"/>
    <property type="project" value="UniProtKB-UniRule"/>
</dbReference>
<dbReference type="CDD" id="cd02655">
    <property type="entry name" value="RNAP_beta'_C"/>
    <property type="match status" value="1"/>
</dbReference>
<dbReference type="CDD" id="cd01609">
    <property type="entry name" value="RNAP_beta'_N"/>
    <property type="match status" value="1"/>
</dbReference>
<dbReference type="FunFam" id="1.10.132.30:FF:000003">
    <property type="entry name" value="DNA-directed RNA polymerase subunit beta"/>
    <property type="match status" value="1"/>
</dbReference>
<dbReference type="FunFam" id="1.10.150.390:FF:000002">
    <property type="entry name" value="DNA-directed RNA polymerase subunit beta"/>
    <property type="match status" value="1"/>
</dbReference>
<dbReference type="FunFam" id="1.10.40.90:FF:000001">
    <property type="entry name" value="DNA-directed RNA polymerase subunit beta"/>
    <property type="match status" value="1"/>
</dbReference>
<dbReference type="FunFam" id="4.10.860.120:FF:000001">
    <property type="entry name" value="DNA-directed RNA polymerase subunit beta"/>
    <property type="match status" value="1"/>
</dbReference>
<dbReference type="Gene3D" id="1.10.132.30">
    <property type="match status" value="1"/>
</dbReference>
<dbReference type="Gene3D" id="1.10.150.390">
    <property type="match status" value="1"/>
</dbReference>
<dbReference type="Gene3D" id="1.10.1790.20">
    <property type="match status" value="1"/>
</dbReference>
<dbReference type="Gene3D" id="1.10.40.90">
    <property type="match status" value="1"/>
</dbReference>
<dbReference type="Gene3D" id="2.40.40.20">
    <property type="match status" value="1"/>
</dbReference>
<dbReference type="Gene3D" id="2.40.50.100">
    <property type="match status" value="3"/>
</dbReference>
<dbReference type="Gene3D" id="4.10.860.120">
    <property type="entry name" value="RNA polymerase II, clamp domain"/>
    <property type="match status" value="1"/>
</dbReference>
<dbReference type="Gene3D" id="1.10.274.100">
    <property type="entry name" value="RNA polymerase Rpb1, domain 3"/>
    <property type="match status" value="1"/>
</dbReference>
<dbReference type="HAMAP" id="MF_01322">
    <property type="entry name" value="RNApol_bact_RpoC"/>
    <property type="match status" value="1"/>
</dbReference>
<dbReference type="InterPro" id="IPR045867">
    <property type="entry name" value="DNA-dir_RpoC_beta_prime"/>
</dbReference>
<dbReference type="InterPro" id="IPR012754">
    <property type="entry name" value="DNA-dir_RpoC_beta_prime_bact"/>
</dbReference>
<dbReference type="InterPro" id="IPR000722">
    <property type="entry name" value="RNA_pol_asu"/>
</dbReference>
<dbReference type="InterPro" id="IPR006592">
    <property type="entry name" value="RNA_pol_N"/>
</dbReference>
<dbReference type="InterPro" id="IPR007080">
    <property type="entry name" value="RNA_pol_Rpb1_1"/>
</dbReference>
<dbReference type="InterPro" id="IPR007066">
    <property type="entry name" value="RNA_pol_Rpb1_3"/>
</dbReference>
<dbReference type="InterPro" id="IPR042102">
    <property type="entry name" value="RNA_pol_Rpb1_3_sf"/>
</dbReference>
<dbReference type="InterPro" id="IPR007083">
    <property type="entry name" value="RNA_pol_Rpb1_4"/>
</dbReference>
<dbReference type="InterPro" id="IPR007081">
    <property type="entry name" value="RNA_pol_Rpb1_5"/>
</dbReference>
<dbReference type="InterPro" id="IPR044893">
    <property type="entry name" value="RNA_pol_Rpb1_clamp_domain"/>
</dbReference>
<dbReference type="InterPro" id="IPR038120">
    <property type="entry name" value="Rpb1_funnel_sf"/>
</dbReference>
<dbReference type="NCBIfam" id="TIGR02386">
    <property type="entry name" value="rpoC_TIGR"/>
    <property type="match status" value="1"/>
</dbReference>
<dbReference type="PANTHER" id="PTHR19376">
    <property type="entry name" value="DNA-DIRECTED RNA POLYMERASE"/>
    <property type="match status" value="1"/>
</dbReference>
<dbReference type="PANTHER" id="PTHR19376:SF54">
    <property type="entry name" value="DNA-DIRECTED RNA POLYMERASE SUBUNIT BETA"/>
    <property type="match status" value="1"/>
</dbReference>
<dbReference type="Pfam" id="PF04997">
    <property type="entry name" value="RNA_pol_Rpb1_1"/>
    <property type="match status" value="1"/>
</dbReference>
<dbReference type="Pfam" id="PF00623">
    <property type="entry name" value="RNA_pol_Rpb1_2"/>
    <property type="match status" value="2"/>
</dbReference>
<dbReference type="Pfam" id="PF04983">
    <property type="entry name" value="RNA_pol_Rpb1_3"/>
    <property type="match status" value="1"/>
</dbReference>
<dbReference type="Pfam" id="PF05000">
    <property type="entry name" value="RNA_pol_Rpb1_4"/>
    <property type="match status" value="1"/>
</dbReference>
<dbReference type="Pfam" id="PF04998">
    <property type="entry name" value="RNA_pol_Rpb1_5"/>
    <property type="match status" value="1"/>
</dbReference>
<dbReference type="SMART" id="SM00663">
    <property type="entry name" value="RPOLA_N"/>
    <property type="match status" value="1"/>
</dbReference>
<dbReference type="SUPFAM" id="SSF64484">
    <property type="entry name" value="beta and beta-prime subunits of DNA dependent RNA-polymerase"/>
    <property type="match status" value="1"/>
</dbReference>
<keyword id="KW-0240">DNA-directed RNA polymerase</keyword>
<keyword id="KW-0460">Magnesium</keyword>
<keyword id="KW-0479">Metal-binding</keyword>
<keyword id="KW-0548">Nucleotidyltransferase</keyword>
<keyword id="KW-1185">Reference proteome</keyword>
<keyword id="KW-0804">Transcription</keyword>
<keyword id="KW-0808">Transferase</keyword>
<keyword id="KW-0862">Zinc</keyword>
<protein>
    <recommendedName>
        <fullName evidence="1">DNA-directed RNA polymerase subunit beta'</fullName>
        <shortName evidence="1">RNAP subunit beta'</shortName>
        <ecNumber evidence="1">2.7.7.6</ecNumber>
    </recommendedName>
    <alternativeName>
        <fullName evidence="1">RNA polymerase subunit beta'</fullName>
    </alternativeName>
    <alternativeName>
        <fullName evidence="1">Transcriptase subunit beta'</fullName>
    </alternativeName>
</protein>
<accession>C4LBV1</accession>
<comment type="function">
    <text evidence="1">DNA-dependent RNA polymerase catalyzes the transcription of DNA into RNA using the four ribonucleoside triphosphates as substrates.</text>
</comment>
<comment type="catalytic activity">
    <reaction evidence="1">
        <text>RNA(n) + a ribonucleoside 5'-triphosphate = RNA(n+1) + diphosphate</text>
        <dbReference type="Rhea" id="RHEA:21248"/>
        <dbReference type="Rhea" id="RHEA-COMP:14527"/>
        <dbReference type="Rhea" id="RHEA-COMP:17342"/>
        <dbReference type="ChEBI" id="CHEBI:33019"/>
        <dbReference type="ChEBI" id="CHEBI:61557"/>
        <dbReference type="ChEBI" id="CHEBI:140395"/>
        <dbReference type="EC" id="2.7.7.6"/>
    </reaction>
</comment>
<comment type="cofactor">
    <cofactor evidence="1">
        <name>Mg(2+)</name>
        <dbReference type="ChEBI" id="CHEBI:18420"/>
    </cofactor>
    <text evidence="1">Binds 1 Mg(2+) ion per subunit.</text>
</comment>
<comment type="cofactor">
    <cofactor evidence="1">
        <name>Zn(2+)</name>
        <dbReference type="ChEBI" id="CHEBI:29105"/>
    </cofactor>
    <text evidence="1">Binds 2 Zn(2+) ions per subunit.</text>
</comment>
<comment type="subunit">
    <text evidence="1">The RNAP catalytic core consists of 2 alpha, 1 beta, 1 beta' and 1 omega subunit. When a sigma factor is associated with the core the holoenzyme is formed, which can initiate transcription.</text>
</comment>
<comment type="similarity">
    <text evidence="1">Belongs to the RNA polymerase beta' chain family.</text>
</comment>
<evidence type="ECO:0000255" key="1">
    <source>
        <dbReference type="HAMAP-Rule" id="MF_01322"/>
    </source>
</evidence>
<organism>
    <name type="scientific">Tolumonas auensis (strain DSM 9187 / NBRC 110442 / TA 4)</name>
    <dbReference type="NCBI Taxonomy" id="595494"/>
    <lineage>
        <taxon>Bacteria</taxon>
        <taxon>Pseudomonadati</taxon>
        <taxon>Pseudomonadota</taxon>
        <taxon>Gammaproteobacteria</taxon>
        <taxon>Aeromonadales</taxon>
        <taxon>Aeromonadaceae</taxon>
        <taxon>Tolumonas</taxon>
    </lineage>
</organism>
<reference key="1">
    <citation type="submission" date="2009-05" db="EMBL/GenBank/DDBJ databases">
        <title>Complete sequence of Tolumonas auensis DSM 9187.</title>
        <authorList>
            <consortium name="US DOE Joint Genome Institute"/>
            <person name="Lucas S."/>
            <person name="Copeland A."/>
            <person name="Lapidus A."/>
            <person name="Glavina del Rio T."/>
            <person name="Tice H."/>
            <person name="Bruce D."/>
            <person name="Goodwin L."/>
            <person name="Pitluck S."/>
            <person name="Chertkov O."/>
            <person name="Brettin T."/>
            <person name="Detter J.C."/>
            <person name="Han C."/>
            <person name="Larimer F."/>
            <person name="Land M."/>
            <person name="Hauser L."/>
            <person name="Kyrpides N."/>
            <person name="Mikhailova N."/>
            <person name="Spring S."/>
            <person name="Beller H."/>
        </authorList>
    </citation>
    <scope>NUCLEOTIDE SEQUENCE [LARGE SCALE GENOMIC DNA]</scope>
    <source>
        <strain>DSM 9187 / NBRC 110442 / TA 4</strain>
    </source>
</reference>
<sequence length="1434" mass="157858">MKDLLKFLKAQSKTEEFDGIKIGLASPDMIRSWSFGEVKKPETINYRTFKPERDGLFCARIFGPVKDYECLCGKYKRLKHRGVICEKCGVEVTQTKVRRERMGHIELASPVAHIWFLKSLPSRIGLLLDMTLRDIERVLYFESFVVVDAGMTSLERSQMLTEEQYLDALEEYGDEFDAKMGAEAILALLRAQDLEHEIATMREELSQTNSETKRKKTTKRLKLMESFLQSGNKPEWMIMTVLPVLPPDLRPLVPLDGGRFATSDLNDLYRRVINRNNRLKRLLDLAAPDIIVRNEKRMLQEAVDALLDNGRRGRAITGSNKRPLKSLADMIKGKQGRFRQNLLGKRVDYSGRSVITVGPTLRLHQCGLPKKMALELFKPFIYGKLETRGLATTIKAAKKMVEREEAVVWDILDEVIREHPVMLNRAPTLHRLGIQAFEPILIEGKAIQLHPLVCSAFNADFDGDQMAVHLPLTLEAQLEARALMMSTNNILSPASGEPIIVPSQDVVLGLYYMTRSCVGAKGEGMVLSGAKEAEKIYRAGLASLHARVKCRITEYVKNEAGELVPKIELKNTTVGRAILSLILPKGMEYALIDPPLPMTEAGKAELAEHPERWIKYVSNQAMGKKQISKVLNTCYRKQGLKDTVIFADQLMYTGFHYAALSGSSVGIDDMVIPDAKKDIIAAAEAEVAEIQEQFQSGLVTAGERYNKVIDIWASANERVSKAMMENLSKETRQNSLGEDEVQASFNSVFMMADSGARGSAAQIRQLAGMRGLMAKPDGSIIETPIVANFREGLNVLQYFISTHGARKGLADTALKTANSGYLTRRLVDVAQDVVITELDCGTSEGLWMTPLIEGGDVVEPLRERVLGRVVAEDVLKPGTEDVLVARNTLLDEQWCNTLERNSVDRVKVRSAIACESDFGICAHCYGRDLARGHLVNNGEATGVIAAQSIGEPGTQLTMRTFHIGGAASRAAAESSASVKNTGVIKLQNAKSVENSAGKLVITSRSSELTIMDELGRTKESHKLPYGSVLEVKDGQAVKAGEIVANWDPHTHPIITEVAGRIQFENMIEGITITRQTDELTGLSSIVVLDVNERTTTGKELRPTVKLVDANGKDVLIPGTDVAAQYFLPGQAIVQLEDGAQVNVGDAVARIPQASSGTKDITGGLPRVADLFEARQPKEPAILAEISGTISFGKETKGKRRLVITPTDGGDAHEEMIPKWRNLNVFEGEKVQQGEVLADGPESAHDILRLRGISPVANYIVNEVQDVYRLQGVKINDKHIEVIVRQMLRKCEIVNPGDSDLLEGEQADVVRVKIANRKLVAEGKQPATFRRVLMGITKASLNTESFISAASFQETTRVLTEAAVSGKVDDLRGLKENVIVGRLIPAGTGFAYHHGRLEKRRQAAKAVVPVTQQATADEAEQNLADLLNAADNLNA</sequence>
<proteinExistence type="inferred from homology"/>
<name>RPOC_TOLAT</name>